<proteinExistence type="inferred from homology"/>
<name>RL17_CLOB8</name>
<accession>A6LPU1</accession>
<evidence type="ECO:0000255" key="1">
    <source>
        <dbReference type="HAMAP-Rule" id="MF_01368"/>
    </source>
</evidence>
<evidence type="ECO:0000305" key="2"/>
<comment type="subunit">
    <text evidence="1">Part of the 50S ribosomal subunit. Contacts protein L32.</text>
</comment>
<comment type="similarity">
    <text evidence="1">Belongs to the bacterial ribosomal protein bL17 family.</text>
</comment>
<feature type="chain" id="PRO_1000087165" description="Large ribosomal subunit protein bL17">
    <location>
        <begin position="1"/>
        <end position="113"/>
    </location>
</feature>
<organism>
    <name type="scientific">Clostridium beijerinckii (strain ATCC 51743 / NCIMB 8052)</name>
    <name type="common">Clostridium acetobutylicum</name>
    <dbReference type="NCBI Taxonomy" id="290402"/>
    <lineage>
        <taxon>Bacteria</taxon>
        <taxon>Bacillati</taxon>
        <taxon>Bacillota</taxon>
        <taxon>Clostridia</taxon>
        <taxon>Eubacteriales</taxon>
        <taxon>Clostridiaceae</taxon>
        <taxon>Clostridium</taxon>
    </lineage>
</organism>
<dbReference type="EMBL" id="CP000721">
    <property type="protein sequence ID" value="ABR32371.1"/>
    <property type="molecule type" value="Genomic_DNA"/>
</dbReference>
<dbReference type="RefSeq" id="WP_011967534.1">
    <property type="nucleotide sequence ID" value="NC_009617.1"/>
</dbReference>
<dbReference type="SMR" id="A6LPU1"/>
<dbReference type="GeneID" id="66343071"/>
<dbReference type="KEGG" id="cbe:Cbei_0181"/>
<dbReference type="eggNOG" id="COG0203">
    <property type="taxonomic scope" value="Bacteria"/>
</dbReference>
<dbReference type="HOGENOM" id="CLU_074407_2_2_9"/>
<dbReference type="Proteomes" id="UP000000565">
    <property type="component" value="Chromosome"/>
</dbReference>
<dbReference type="GO" id="GO:0022625">
    <property type="term" value="C:cytosolic large ribosomal subunit"/>
    <property type="evidence" value="ECO:0007669"/>
    <property type="project" value="TreeGrafter"/>
</dbReference>
<dbReference type="GO" id="GO:0003735">
    <property type="term" value="F:structural constituent of ribosome"/>
    <property type="evidence" value="ECO:0007669"/>
    <property type="project" value="InterPro"/>
</dbReference>
<dbReference type="GO" id="GO:0006412">
    <property type="term" value="P:translation"/>
    <property type="evidence" value="ECO:0007669"/>
    <property type="project" value="UniProtKB-UniRule"/>
</dbReference>
<dbReference type="FunFam" id="3.90.1030.10:FF:000001">
    <property type="entry name" value="50S ribosomal protein L17"/>
    <property type="match status" value="1"/>
</dbReference>
<dbReference type="Gene3D" id="3.90.1030.10">
    <property type="entry name" value="Ribosomal protein L17"/>
    <property type="match status" value="1"/>
</dbReference>
<dbReference type="HAMAP" id="MF_01368">
    <property type="entry name" value="Ribosomal_bL17"/>
    <property type="match status" value="1"/>
</dbReference>
<dbReference type="InterPro" id="IPR000456">
    <property type="entry name" value="Ribosomal_bL17"/>
</dbReference>
<dbReference type="InterPro" id="IPR047859">
    <property type="entry name" value="Ribosomal_bL17_CS"/>
</dbReference>
<dbReference type="InterPro" id="IPR036373">
    <property type="entry name" value="Ribosomal_bL17_sf"/>
</dbReference>
<dbReference type="NCBIfam" id="TIGR00059">
    <property type="entry name" value="L17"/>
    <property type="match status" value="1"/>
</dbReference>
<dbReference type="PANTHER" id="PTHR14413:SF16">
    <property type="entry name" value="LARGE RIBOSOMAL SUBUNIT PROTEIN BL17M"/>
    <property type="match status" value="1"/>
</dbReference>
<dbReference type="PANTHER" id="PTHR14413">
    <property type="entry name" value="RIBOSOMAL PROTEIN L17"/>
    <property type="match status" value="1"/>
</dbReference>
<dbReference type="Pfam" id="PF01196">
    <property type="entry name" value="Ribosomal_L17"/>
    <property type="match status" value="1"/>
</dbReference>
<dbReference type="SUPFAM" id="SSF64263">
    <property type="entry name" value="Prokaryotic ribosomal protein L17"/>
    <property type="match status" value="1"/>
</dbReference>
<dbReference type="PROSITE" id="PS01167">
    <property type="entry name" value="RIBOSOMAL_L17"/>
    <property type="match status" value="1"/>
</dbReference>
<gene>
    <name evidence="1" type="primary">rplQ</name>
    <name type="ordered locus">Cbei_0181</name>
</gene>
<reference key="1">
    <citation type="submission" date="2007-06" db="EMBL/GenBank/DDBJ databases">
        <title>Complete sequence of Clostridium beijerinckii NCIMB 8052.</title>
        <authorList>
            <consortium name="US DOE Joint Genome Institute"/>
            <person name="Copeland A."/>
            <person name="Lucas S."/>
            <person name="Lapidus A."/>
            <person name="Barry K."/>
            <person name="Detter J.C."/>
            <person name="Glavina del Rio T."/>
            <person name="Hammon N."/>
            <person name="Israni S."/>
            <person name="Dalin E."/>
            <person name="Tice H."/>
            <person name="Pitluck S."/>
            <person name="Sims D."/>
            <person name="Brettin T."/>
            <person name="Bruce D."/>
            <person name="Tapia R."/>
            <person name="Brainard J."/>
            <person name="Schmutz J."/>
            <person name="Larimer F."/>
            <person name="Land M."/>
            <person name="Hauser L."/>
            <person name="Kyrpides N."/>
            <person name="Mikhailova N."/>
            <person name="Bennet G."/>
            <person name="Cann I."/>
            <person name="Chen J.-S."/>
            <person name="Contreras A.L."/>
            <person name="Jones D."/>
            <person name="Kashket E."/>
            <person name="Mitchell W."/>
            <person name="Stoddard S."/>
            <person name="Schwarz W."/>
            <person name="Qureshi N."/>
            <person name="Young M."/>
            <person name="Shi Z."/>
            <person name="Ezeji T."/>
            <person name="White B."/>
            <person name="Blaschek H."/>
            <person name="Richardson P."/>
        </authorList>
    </citation>
    <scope>NUCLEOTIDE SEQUENCE [LARGE SCALE GENOMIC DNA]</scope>
    <source>
        <strain>ATCC 51743 / NCIMB 8052</strain>
    </source>
</reference>
<sequence length="113" mass="12822">MAGHRKLGLPTDQRRAMLRNLVTSLLKHGKIETTETRAKETRSIAEKMITLGKRGDLHARRQVLSYVQEELVVKNLFDNVAPKYTERNGGYTRIIKKGPRRGDGAEIVILELV</sequence>
<protein>
    <recommendedName>
        <fullName evidence="1">Large ribosomal subunit protein bL17</fullName>
    </recommendedName>
    <alternativeName>
        <fullName evidence="2">50S ribosomal protein L17</fullName>
    </alternativeName>
</protein>
<keyword id="KW-0687">Ribonucleoprotein</keyword>
<keyword id="KW-0689">Ribosomal protein</keyword>